<gene>
    <name evidence="1" type="primary">accD</name>
    <name type="ordered locus">SH1224</name>
</gene>
<sequence>MFKDFFNRSSKKRKYLTVQDSKQNEVPAGIMTKCPKCKKIMYTKELNENLNVCFNCDHHIALPAYKRIEAITDENSFVEFDKGMTSANPLDFPGYQEKIEKDQQKTDLSEAVVTGTAKLDGVQFGVAVMDARFRMGSMGSVVGEKICRIIDYATEHRLPFILFSASGGARMQEGIISLMQMGKTSVSLKRHSDAGLLYISYLTHPTTGGVSASFASVGDINLSEPKALIGFAGRRVIEQTINEKLPDDFQTAEFLLEHGQLDKVVHRKEMKETLAQLLKLHQEVKKDA</sequence>
<evidence type="ECO:0000255" key="1">
    <source>
        <dbReference type="HAMAP-Rule" id="MF_01395"/>
    </source>
</evidence>
<evidence type="ECO:0000255" key="2">
    <source>
        <dbReference type="PROSITE-ProRule" id="PRU01136"/>
    </source>
</evidence>
<reference key="1">
    <citation type="journal article" date="2005" name="J. Bacteriol.">
        <title>Whole-genome sequencing of Staphylococcus haemolyticus uncovers the extreme plasticity of its genome and the evolution of human-colonizing staphylococcal species.</title>
        <authorList>
            <person name="Takeuchi F."/>
            <person name="Watanabe S."/>
            <person name="Baba T."/>
            <person name="Yuzawa H."/>
            <person name="Ito T."/>
            <person name="Morimoto Y."/>
            <person name="Kuroda M."/>
            <person name="Cui L."/>
            <person name="Takahashi M."/>
            <person name="Ankai A."/>
            <person name="Baba S."/>
            <person name="Fukui S."/>
            <person name="Lee J.C."/>
            <person name="Hiramatsu K."/>
        </authorList>
    </citation>
    <scope>NUCLEOTIDE SEQUENCE [LARGE SCALE GENOMIC DNA]</scope>
    <source>
        <strain>JCSC1435</strain>
    </source>
</reference>
<accession>Q4L742</accession>
<name>ACCD_STAHJ</name>
<feature type="chain" id="PRO_0000389864" description="Acetyl-coenzyme A carboxylase carboxyl transferase subunit beta">
    <location>
        <begin position="1"/>
        <end position="288"/>
    </location>
</feature>
<feature type="domain" description="CoA carboxyltransferase N-terminal" evidence="2">
    <location>
        <begin position="30"/>
        <end position="288"/>
    </location>
</feature>
<feature type="zinc finger region" description="C4-type" evidence="1">
    <location>
        <begin position="34"/>
        <end position="56"/>
    </location>
</feature>
<feature type="binding site" evidence="1">
    <location>
        <position position="34"/>
    </location>
    <ligand>
        <name>Zn(2+)</name>
        <dbReference type="ChEBI" id="CHEBI:29105"/>
    </ligand>
</feature>
<feature type="binding site" evidence="1">
    <location>
        <position position="37"/>
    </location>
    <ligand>
        <name>Zn(2+)</name>
        <dbReference type="ChEBI" id="CHEBI:29105"/>
    </ligand>
</feature>
<feature type="binding site" evidence="1">
    <location>
        <position position="53"/>
    </location>
    <ligand>
        <name>Zn(2+)</name>
        <dbReference type="ChEBI" id="CHEBI:29105"/>
    </ligand>
</feature>
<feature type="binding site" evidence="1">
    <location>
        <position position="56"/>
    </location>
    <ligand>
        <name>Zn(2+)</name>
        <dbReference type="ChEBI" id="CHEBI:29105"/>
    </ligand>
</feature>
<proteinExistence type="inferred from homology"/>
<protein>
    <recommendedName>
        <fullName evidence="1">Acetyl-coenzyme A carboxylase carboxyl transferase subunit beta</fullName>
        <shortName evidence="1">ACCase subunit beta</shortName>
        <shortName evidence="1">Acetyl-CoA carboxylase carboxyltransferase subunit beta</shortName>
        <ecNumber evidence="1">2.1.3.15</ecNumber>
    </recommendedName>
</protein>
<organism>
    <name type="scientific">Staphylococcus haemolyticus (strain JCSC1435)</name>
    <dbReference type="NCBI Taxonomy" id="279808"/>
    <lineage>
        <taxon>Bacteria</taxon>
        <taxon>Bacillati</taxon>
        <taxon>Bacillota</taxon>
        <taxon>Bacilli</taxon>
        <taxon>Bacillales</taxon>
        <taxon>Staphylococcaceae</taxon>
        <taxon>Staphylococcus</taxon>
    </lineage>
</organism>
<keyword id="KW-0067">ATP-binding</keyword>
<keyword id="KW-0963">Cytoplasm</keyword>
<keyword id="KW-0275">Fatty acid biosynthesis</keyword>
<keyword id="KW-0276">Fatty acid metabolism</keyword>
<keyword id="KW-0444">Lipid biosynthesis</keyword>
<keyword id="KW-0443">Lipid metabolism</keyword>
<keyword id="KW-0479">Metal-binding</keyword>
<keyword id="KW-0547">Nucleotide-binding</keyword>
<keyword id="KW-0808">Transferase</keyword>
<keyword id="KW-0862">Zinc</keyword>
<keyword id="KW-0863">Zinc-finger</keyword>
<comment type="function">
    <text evidence="1">Component of the acetyl coenzyme A carboxylase (ACC) complex. Biotin carboxylase (BC) catalyzes the carboxylation of biotin on its carrier protein (BCCP) and then the CO(2) group is transferred by the transcarboxylase to acetyl-CoA to form malonyl-CoA.</text>
</comment>
<comment type="catalytic activity">
    <reaction evidence="1">
        <text>N(6)-carboxybiotinyl-L-lysyl-[protein] + acetyl-CoA = N(6)-biotinyl-L-lysyl-[protein] + malonyl-CoA</text>
        <dbReference type="Rhea" id="RHEA:54728"/>
        <dbReference type="Rhea" id="RHEA-COMP:10505"/>
        <dbReference type="Rhea" id="RHEA-COMP:10506"/>
        <dbReference type="ChEBI" id="CHEBI:57288"/>
        <dbReference type="ChEBI" id="CHEBI:57384"/>
        <dbReference type="ChEBI" id="CHEBI:83144"/>
        <dbReference type="ChEBI" id="CHEBI:83145"/>
        <dbReference type="EC" id="2.1.3.15"/>
    </reaction>
</comment>
<comment type="cofactor">
    <cofactor evidence="1">
        <name>Zn(2+)</name>
        <dbReference type="ChEBI" id="CHEBI:29105"/>
    </cofactor>
    <text evidence="1">Binds 1 zinc ion per subunit.</text>
</comment>
<comment type="pathway">
    <text evidence="1">Lipid metabolism; malonyl-CoA biosynthesis; malonyl-CoA from acetyl-CoA: step 1/1.</text>
</comment>
<comment type="subunit">
    <text evidence="1">Acetyl-CoA carboxylase is a heterohexamer composed of biotin carboxyl carrier protein (AccB), biotin carboxylase (AccC) and two subunits each of ACCase subunit alpha (AccA) and ACCase subunit beta (AccD).</text>
</comment>
<comment type="subcellular location">
    <subcellularLocation>
        <location evidence="1">Cytoplasm</location>
    </subcellularLocation>
</comment>
<comment type="similarity">
    <text evidence="1">Belongs to the AccD/PCCB family.</text>
</comment>
<dbReference type="EC" id="2.1.3.15" evidence="1"/>
<dbReference type="EMBL" id="AP006716">
    <property type="protein sequence ID" value="BAE04533.1"/>
    <property type="molecule type" value="Genomic_DNA"/>
</dbReference>
<dbReference type="RefSeq" id="WP_011275523.1">
    <property type="nucleotide sequence ID" value="NC_007168.1"/>
</dbReference>
<dbReference type="SMR" id="Q4L742"/>
<dbReference type="GeneID" id="93780633"/>
<dbReference type="KEGG" id="sha:SH1224"/>
<dbReference type="eggNOG" id="COG0777">
    <property type="taxonomic scope" value="Bacteria"/>
</dbReference>
<dbReference type="HOGENOM" id="CLU_015486_1_0_9"/>
<dbReference type="OrthoDB" id="9772975at2"/>
<dbReference type="UniPathway" id="UPA00655">
    <property type="reaction ID" value="UER00711"/>
</dbReference>
<dbReference type="Proteomes" id="UP000000543">
    <property type="component" value="Chromosome"/>
</dbReference>
<dbReference type="GO" id="GO:0009317">
    <property type="term" value="C:acetyl-CoA carboxylase complex"/>
    <property type="evidence" value="ECO:0007669"/>
    <property type="project" value="InterPro"/>
</dbReference>
<dbReference type="GO" id="GO:0003989">
    <property type="term" value="F:acetyl-CoA carboxylase activity"/>
    <property type="evidence" value="ECO:0007669"/>
    <property type="project" value="InterPro"/>
</dbReference>
<dbReference type="GO" id="GO:0005524">
    <property type="term" value="F:ATP binding"/>
    <property type="evidence" value="ECO:0007669"/>
    <property type="project" value="UniProtKB-KW"/>
</dbReference>
<dbReference type="GO" id="GO:0016743">
    <property type="term" value="F:carboxyl- or carbamoyltransferase activity"/>
    <property type="evidence" value="ECO:0007669"/>
    <property type="project" value="UniProtKB-UniRule"/>
</dbReference>
<dbReference type="GO" id="GO:0008270">
    <property type="term" value="F:zinc ion binding"/>
    <property type="evidence" value="ECO:0007669"/>
    <property type="project" value="UniProtKB-UniRule"/>
</dbReference>
<dbReference type="GO" id="GO:0006633">
    <property type="term" value="P:fatty acid biosynthetic process"/>
    <property type="evidence" value="ECO:0007669"/>
    <property type="project" value="UniProtKB-KW"/>
</dbReference>
<dbReference type="GO" id="GO:2001295">
    <property type="term" value="P:malonyl-CoA biosynthetic process"/>
    <property type="evidence" value="ECO:0007669"/>
    <property type="project" value="UniProtKB-UniRule"/>
</dbReference>
<dbReference type="Gene3D" id="3.90.226.10">
    <property type="entry name" value="2-enoyl-CoA Hydratase, Chain A, domain 1"/>
    <property type="match status" value="1"/>
</dbReference>
<dbReference type="HAMAP" id="MF_01395">
    <property type="entry name" value="AcetylCoA_CT_beta"/>
    <property type="match status" value="1"/>
</dbReference>
<dbReference type="InterPro" id="IPR034733">
    <property type="entry name" value="AcCoA_carboxyl_beta"/>
</dbReference>
<dbReference type="InterPro" id="IPR000438">
    <property type="entry name" value="Acetyl_CoA_COase_Trfase_b_su"/>
</dbReference>
<dbReference type="InterPro" id="IPR029045">
    <property type="entry name" value="ClpP/crotonase-like_dom_sf"/>
</dbReference>
<dbReference type="InterPro" id="IPR011762">
    <property type="entry name" value="COA_CT_N"/>
</dbReference>
<dbReference type="InterPro" id="IPR041010">
    <property type="entry name" value="Znf-ACC"/>
</dbReference>
<dbReference type="NCBIfam" id="TIGR00515">
    <property type="entry name" value="accD"/>
    <property type="match status" value="1"/>
</dbReference>
<dbReference type="PANTHER" id="PTHR42995">
    <property type="entry name" value="ACETYL-COENZYME A CARBOXYLASE CARBOXYL TRANSFERASE SUBUNIT BETA, CHLOROPLASTIC"/>
    <property type="match status" value="1"/>
</dbReference>
<dbReference type="PANTHER" id="PTHR42995:SF5">
    <property type="entry name" value="ACETYL-COENZYME A CARBOXYLASE CARBOXYL TRANSFERASE SUBUNIT BETA, CHLOROPLASTIC"/>
    <property type="match status" value="1"/>
</dbReference>
<dbReference type="Pfam" id="PF01039">
    <property type="entry name" value="Carboxyl_trans"/>
    <property type="match status" value="1"/>
</dbReference>
<dbReference type="Pfam" id="PF17848">
    <property type="entry name" value="Zn_ribbon_ACC"/>
    <property type="match status" value="1"/>
</dbReference>
<dbReference type="PRINTS" id="PR01070">
    <property type="entry name" value="ACCCTRFRASEB"/>
</dbReference>
<dbReference type="SUPFAM" id="SSF52096">
    <property type="entry name" value="ClpP/crotonase"/>
    <property type="match status" value="1"/>
</dbReference>
<dbReference type="PROSITE" id="PS50980">
    <property type="entry name" value="COA_CT_NTER"/>
    <property type="match status" value="1"/>
</dbReference>